<name>ACPH_ECO57</name>
<organism>
    <name type="scientific">Escherichia coli O157:H7</name>
    <dbReference type="NCBI Taxonomy" id="83334"/>
    <lineage>
        <taxon>Bacteria</taxon>
        <taxon>Pseudomonadati</taxon>
        <taxon>Pseudomonadota</taxon>
        <taxon>Gammaproteobacteria</taxon>
        <taxon>Enterobacterales</taxon>
        <taxon>Enterobacteriaceae</taxon>
        <taxon>Escherichia</taxon>
    </lineage>
</organism>
<protein>
    <recommendedName>
        <fullName evidence="1">Acyl carrier protein phosphodiesterase</fullName>
        <shortName evidence="1">ACP phosphodiesterase</shortName>
        <ecNumber evidence="1">3.1.4.14</ecNumber>
    </recommendedName>
</protein>
<gene>
    <name evidence="1" type="primary">acpH</name>
    <name type="ordered locus">Z0503</name>
    <name type="ordered locus">ECs0455</name>
</gene>
<feature type="chain" id="PRO_0000226266" description="Acyl carrier protein phosphodiesterase">
    <location>
        <begin position="1"/>
        <end position="193"/>
    </location>
</feature>
<keyword id="KW-0275">Fatty acid biosynthesis</keyword>
<keyword id="KW-0276">Fatty acid metabolism</keyword>
<keyword id="KW-0378">Hydrolase</keyword>
<keyword id="KW-0444">Lipid biosynthesis</keyword>
<keyword id="KW-0443">Lipid metabolism</keyword>
<keyword id="KW-1185">Reference proteome</keyword>
<proteinExistence type="inferred from homology"/>
<dbReference type="EC" id="3.1.4.14" evidence="1"/>
<dbReference type="EMBL" id="AE005174">
    <property type="protein sequence ID" value="AAG54751.1"/>
    <property type="molecule type" value="Genomic_DNA"/>
</dbReference>
<dbReference type="EMBL" id="BA000007">
    <property type="protein sequence ID" value="BAB33878.1"/>
    <property type="molecule type" value="Genomic_DNA"/>
</dbReference>
<dbReference type="PIR" id="C85536">
    <property type="entry name" value="C85536"/>
</dbReference>
<dbReference type="PIR" id="G90685">
    <property type="entry name" value="G90685"/>
</dbReference>
<dbReference type="RefSeq" id="NP_308482.1">
    <property type="nucleotide sequence ID" value="NC_002695.1"/>
</dbReference>
<dbReference type="RefSeq" id="WP_001009882.1">
    <property type="nucleotide sequence ID" value="NZ_VOAI01000005.1"/>
</dbReference>
<dbReference type="SMR" id="Q8XE96"/>
<dbReference type="STRING" id="155864.Z0503"/>
<dbReference type="GeneID" id="75170421"/>
<dbReference type="GeneID" id="914557"/>
<dbReference type="KEGG" id="ece:Z0503"/>
<dbReference type="KEGG" id="ecs:ECs_0455"/>
<dbReference type="PATRIC" id="fig|386585.9.peg.555"/>
<dbReference type="eggNOG" id="COG3124">
    <property type="taxonomic scope" value="Bacteria"/>
</dbReference>
<dbReference type="HOGENOM" id="CLU_099370_1_0_6"/>
<dbReference type="OMA" id="MNFLAHI"/>
<dbReference type="Proteomes" id="UP000000558">
    <property type="component" value="Chromosome"/>
</dbReference>
<dbReference type="Proteomes" id="UP000002519">
    <property type="component" value="Chromosome"/>
</dbReference>
<dbReference type="GO" id="GO:0008770">
    <property type="term" value="F:[acyl-carrier-protein] phosphodiesterase activity"/>
    <property type="evidence" value="ECO:0007669"/>
    <property type="project" value="UniProtKB-UniRule"/>
</dbReference>
<dbReference type="GO" id="GO:0006633">
    <property type="term" value="P:fatty acid biosynthetic process"/>
    <property type="evidence" value="ECO:0007669"/>
    <property type="project" value="UniProtKB-UniRule"/>
</dbReference>
<dbReference type="HAMAP" id="MF_01950">
    <property type="entry name" value="AcpH"/>
    <property type="match status" value="1"/>
</dbReference>
<dbReference type="InterPro" id="IPR007431">
    <property type="entry name" value="ACP_PD"/>
</dbReference>
<dbReference type="InterPro" id="IPR023491">
    <property type="entry name" value="ACP_phosphodiesterase_gpbac"/>
</dbReference>
<dbReference type="NCBIfam" id="NF007466">
    <property type="entry name" value="PRK10045.1"/>
    <property type="match status" value="1"/>
</dbReference>
<dbReference type="PANTHER" id="PTHR38764">
    <property type="entry name" value="ACYL CARRIER PROTEIN PHOSPHODIESTERASE"/>
    <property type="match status" value="1"/>
</dbReference>
<dbReference type="PANTHER" id="PTHR38764:SF1">
    <property type="entry name" value="ACYL CARRIER PROTEIN PHOSPHODIESTERASE"/>
    <property type="match status" value="1"/>
</dbReference>
<dbReference type="Pfam" id="PF04336">
    <property type="entry name" value="ACP_PD"/>
    <property type="match status" value="1"/>
</dbReference>
<dbReference type="PIRSF" id="PIRSF011489">
    <property type="entry name" value="DUF479"/>
    <property type="match status" value="1"/>
</dbReference>
<reference key="1">
    <citation type="journal article" date="2001" name="Nature">
        <title>Genome sequence of enterohaemorrhagic Escherichia coli O157:H7.</title>
        <authorList>
            <person name="Perna N.T."/>
            <person name="Plunkett G. III"/>
            <person name="Burland V."/>
            <person name="Mau B."/>
            <person name="Glasner J.D."/>
            <person name="Rose D.J."/>
            <person name="Mayhew G.F."/>
            <person name="Evans P.S."/>
            <person name="Gregor J."/>
            <person name="Kirkpatrick H.A."/>
            <person name="Posfai G."/>
            <person name="Hackett J."/>
            <person name="Klink S."/>
            <person name="Boutin A."/>
            <person name="Shao Y."/>
            <person name="Miller L."/>
            <person name="Grotbeck E.J."/>
            <person name="Davis N.W."/>
            <person name="Lim A."/>
            <person name="Dimalanta E.T."/>
            <person name="Potamousis K."/>
            <person name="Apodaca J."/>
            <person name="Anantharaman T.S."/>
            <person name="Lin J."/>
            <person name="Yen G."/>
            <person name="Schwartz D.C."/>
            <person name="Welch R.A."/>
            <person name="Blattner F.R."/>
        </authorList>
    </citation>
    <scope>NUCLEOTIDE SEQUENCE [LARGE SCALE GENOMIC DNA]</scope>
    <source>
        <strain>O157:H7 / EDL933 / ATCC 700927 / EHEC</strain>
    </source>
</reference>
<reference key="2">
    <citation type="journal article" date="2001" name="DNA Res.">
        <title>Complete genome sequence of enterohemorrhagic Escherichia coli O157:H7 and genomic comparison with a laboratory strain K-12.</title>
        <authorList>
            <person name="Hayashi T."/>
            <person name="Makino K."/>
            <person name="Ohnishi M."/>
            <person name="Kurokawa K."/>
            <person name="Ishii K."/>
            <person name="Yokoyama K."/>
            <person name="Han C.-G."/>
            <person name="Ohtsubo E."/>
            <person name="Nakayama K."/>
            <person name="Murata T."/>
            <person name="Tanaka M."/>
            <person name="Tobe T."/>
            <person name="Iida T."/>
            <person name="Takami H."/>
            <person name="Honda T."/>
            <person name="Sasakawa C."/>
            <person name="Ogasawara N."/>
            <person name="Yasunaga T."/>
            <person name="Kuhara S."/>
            <person name="Shiba T."/>
            <person name="Hattori M."/>
            <person name="Shinagawa H."/>
        </authorList>
    </citation>
    <scope>NUCLEOTIDE SEQUENCE [LARGE SCALE GENOMIC DNA]</scope>
    <source>
        <strain>O157:H7 / Sakai / RIMD 0509952 / EHEC</strain>
    </source>
</reference>
<evidence type="ECO:0000255" key="1">
    <source>
        <dbReference type="HAMAP-Rule" id="MF_01950"/>
    </source>
</evidence>
<sequence>MNFLAHLHLAHLAESSLSGNLLADFVRGNPEESFPPDVVAGIHMHRRIDVLTDNLPEVREAREWFRSETRRVAPITLDVMWDHFLSRHWSQLSPDFPLQEFVCYAREQVMTILPDSPPRFINLNNYLWSEQWLVRYRDMDFIQNVLNGMASRRPRLDALRDSWYDLDAHYAALETRFWQFYPRMMAQASRKAL</sequence>
<comment type="function">
    <text evidence="1">Converts holo-ACP to apo-ACP by hydrolytic cleavage of the phosphopantetheine prosthetic group from ACP.</text>
</comment>
<comment type="catalytic activity">
    <reaction evidence="1">
        <text>holo-[ACP] + H2O = apo-[ACP] + (R)-4'-phosphopantetheine + H(+)</text>
        <dbReference type="Rhea" id="RHEA:20537"/>
        <dbReference type="Rhea" id="RHEA-COMP:9685"/>
        <dbReference type="Rhea" id="RHEA-COMP:9690"/>
        <dbReference type="ChEBI" id="CHEBI:15377"/>
        <dbReference type="ChEBI" id="CHEBI:15378"/>
        <dbReference type="ChEBI" id="CHEBI:29999"/>
        <dbReference type="ChEBI" id="CHEBI:61723"/>
        <dbReference type="ChEBI" id="CHEBI:64479"/>
        <dbReference type="EC" id="3.1.4.14"/>
    </reaction>
</comment>
<comment type="similarity">
    <text evidence="1">Belongs to the AcpH family.</text>
</comment>
<accession>Q8XE96</accession>
<accession>Q7AH16</accession>